<proteinExistence type="inferred from homology"/>
<gene>
    <name evidence="1" type="primary">rlmG</name>
    <name type="ordered locus">PSEEN4774</name>
</gene>
<name>RLMG_PSEE4</name>
<keyword id="KW-0963">Cytoplasm</keyword>
<keyword id="KW-0489">Methyltransferase</keyword>
<keyword id="KW-0698">rRNA processing</keyword>
<keyword id="KW-0949">S-adenosyl-L-methionine</keyword>
<keyword id="KW-0808">Transferase</keyword>
<evidence type="ECO:0000255" key="1">
    <source>
        <dbReference type="HAMAP-Rule" id="MF_01859"/>
    </source>
</evidence>
<accession>Q1I4K4</accession>
<organism>
    <name type="scientific">Pseudomonas entomophila (strain L48)</name>
    <dbReference type="NCBI Taxonomy" id="384676"/>
    <lineage>
        <taxon>Bacteria</taxon>
        <taxon>Pseudomonadati</taxon>
        <taxon>Pseudomonadota</taxon>
        <taxon>Gammaproteobacteria</taxon>
        <taxon>Pseudomonadales</taxon>
        <taxon>Pseudomonadaceae</taxon>
        <taxon>Pseudomonas</taxon>
    </lineage>
</organism>
<protein>
    <recommendedName>
        <fullName evidence="1">Ribosomal RNA large subunit methyltransferase G</fullName>
        <ecNumber evidence="1">2.1.1.174</ecNumber>
    </recommendedName>
    <alternativeName>
        <fullName evidence="1">23S rRNA m2G1835 methyltransferase</fullName>
    </alternativeName>
    <alternativeName>
        <fullName evidence="1">rRNA (guanine-N(2)-)-methyltransferase RlmG</fullName>
    </alternativeName>
</protein>
<comment type="function">
    <text evidence="1">Specifically methylates the guanine in position 1835 (m2G1835) of 23S rRNA.</text>
</comment>
<comment type="catalytic activity">
    <reaction evidence="1">
        <text>guanosine(1835) in 23S rRNA + S-adenosyl-L-methionine = N(2)-methylguanosine(1835) in 23S rRNA + S-adenosyl-L-homocysteine + H(+)</text>
        <dbReference type="Rhea" id="RHEA:42744"/>
        <dbReference type="Rhea" id="RHEA-COMP:10217"/>
        <dbReference type="Rhea" id="RHEA-COMP:10218"/>
        <dbReference type="ChEBI" id="CHEBI:15378"/>
        <dbReference type="ChEBI" id="CHEBI:57856"/>
        <dbReference type="ChEBI" id="CHEBI:59789"/>
        <dbReference type="ChEBI" id="CHEBI:74269"/>
        <dbReference type="ChEBI" id="CHEBI:74481"/>
        <dbReference type="EC" id="2.1.1.174"/>
    </reaction>
</comment>
<comment type="subcellular location">
    <subcellularLocation>
        <location evidence="1">Cytoplasm</location>
    </subcellularLocation>
</comment>
<comment type="similarity">
    <text evidence="1">Belongs to the methyltransferase superfamily. RlmG family.</text>
</comment>
<feature type="chain" id="PRO_0000366475" description="Ribosomal RNA large subunit methyltransferase G">
    <location>
        <begin position="1"/>
        <end position="374"/>
    </location>
</feature>
<reference key="1">
    <citation type="journal article" date="2006" name="Nat. Biotechnol.">
        <title>Complete genome sequence of the entomopathogenic and metabolically versatile soil bacterium Pseudomonas entomophila.</title>
        <authorList>
            <person name="Vodovar N."/>
            <person name="Vallenet D."/>
            <person name="Cruveiller S."/>
            <person name="Rouy Z."/>
            <person name="Barbe V."/>
            <person name="Acosta C."/>
            <person name="Cattolico L."/>
            <person name="Jubin C."/>
            <person name="Lajus A."/>
            <person name="Segurens B."/>
            <person name="Vacherie B."/>
            <person name="Wincker P."/>
            <person name="Weissenbach J."/>
            <person name="Lemaitre B."/>
            <person name="Medigue C."/>
            <person name="Boccard F."/>
        </authorList>
    </citation>
    <scope>NUCLEOTIDE SEQUENCE [LARGE SCALE GENOMIC DNA]</scope>
    <source>
        <strain>L48</strain>
    </source>
</reference>
<sequence length="374" mass="40524">MPLFNSPFADLDLIRQPEQANDPLLAFDAADQYLLEHLAAQAPAANCKVLVLNDSFGALAASLAGRLEVISSGDSHLARMALEKNLARNGKGFDSVPFMPANETWQGPFDRVLVRVPKTLALLEEQLIRLQGQLAPGAQVIAGAMIKHLPRAAGDLMEKYIGPVQASLAQKKARLLTATVAERPLASSPYPSRYRLDSPALELVNHANVFCREGLDIGTRAFLPHLPRNLGQARVADLGCGNGVLAIASALANPDAHYTLVDESYMAVQSARDNWQAALGERAVEIHAADGLAGQEKQSLEVVLCNPPFHQQQVVGDFLAWRMFQQAREALVVGGALYIVGNRHLGYHSKLARLFRGVEQVAATPKFVVLKARK</sequence>
<dbReference type="EC" id="2.1.1.174" evidence="1"/>
<dbReference type="EMBL" id="CT573326">
    <property type="protein sequence ID" value="CAK17432.1"/>
    <property type="molecule type" value="Genomic_DNA"/>
</dbReference>
<dbReference type="RefSeq" id="WP_011535794.1">
    <property type="nucleotide sequence ID" value="NC_008027.1"/>
</dbReference>
<dbReference type="SMR" id="Q1I4K4"/>
<dbReference type="STRING" id="384676.PSEEN4774"/>
<dbReference type="GeneID" id="32807735"/>
<dbReference type="KEGG" id="pen:PSEEN4774"/>
<dbReference type="eggNOG" id="COG2813">
    <property type="taxonomic scope" value="Bacteria"/>
</dbReference>
<dbReference type="HOGENOM" id="CLU_040288_4_0_6"/>
<dbReference type="OrthoDB" id="29650at2"/>
<dbReference type="Proteomes" id="UP000000658">
    <property type="component" value="Chromosome"/>
</dbReference>
<dbReference type="GO" id="GO:0005737">
    <property type="term" value="C:cytoplasm"/>
    <property type="evidence" value="ECO:0007669"/>
    <property type="project" value="UniProtKB-SubCell"/>
</dbReference>
<dbReference type="GO" id="GO:0052916">
    <property type="term" value="F:23S rRNA (guanine(1835)-N(2))-methyltransferase activity"/>
    <property type="evidence" value="ECO:0007669"/>
    <property type="project" value="UniProtKB-EC"/>
</dbReference>
<dbReference type="GO" id="GO:0003676">
    <property type="term" value="F:nucleic acid binding"/>
    <property type="evidence" value="ECO:0007669"/>
    <property type="project" value="InterPro"/>
</dbReference>
<dbReference type="CDD" id="cd02440">
    <property type="entry name" value="AdoMet_MTases"/>
    <property type="match status" value="1"/>
</dbReference>
<dbReference type="Gene3D" id="3.40.50.150">
    <property type="entry name" value="Vaccinia Virus protein VP39"/>
    <property type="match status" value="2"/>
</dbReference>
<dbReference type="HAMAP" id="MF_01859">
    <property type="entry name" value="23SrRNA_methyltr_G"/>
    <property type="match status" value="1"/>
</dbReference>
<dbReference type="InterPro" id="IPR002052">
    <property type="entry name" value="DNA_methylase_N6_adenine_CS"/>
</dbReference>
<dbReference type="InterPro" id="IPR017237">
    <property type="entry name" value="rRNA_m2G-MeTrfase_RlmG"/>
</dbReference>
<dbReference type="InterPro" id="IPR046977">
    <property type="entry name" value="RsmC/RlmG"/>
</dbReference>
<dbReference type="InterPro" id="IPR029063">
    <property type="entry name" value="SAM-dependent_MTases_sf"/>
</dbReference>
<dbReference type="InterPro" id="IPR007848">
    <property type="entry name" value="Small_mtfrase_dom"/>
</dbReference>
<dbReference type="PANTHER" id="PTHR47816:SF5">
    <property type="entry name" value="RIBOSOMAL RNA LARGE SUBUNIT METHYLTRANSFERASE G"/>
    <property type="match status" value="1"/>
</dbReference>
<dbReference type="PANTHER" id="PTHR47816">
    <property type="entry name" value="RIBOSOMAL RNA SMALL SUBUNIT METHYLTRANSFERASE C"/>
    <property type="match status" value="1"/>
</dbReference>
<dbReference type="Pfam" id="PF05175">
    <property type="entry name" value="MTS"/>
    <property type="match status" value="1"/>
</dbReference>
<dbReference type="PIRSF" id="PIRSF037565">
    <property type="entry name" value="RRNA_m2G_Mtase_RsmD_prd"/>
    <property type="match status" value="1"/>
</dbReference>
<dbReference type="SUPFAM" id="SSF53335">
    <property type="entry name" value="S-adenosyl-L-methionine-dependent methyltransferases"/>
    <property type="match status" value="1"/>
</dbReference>